<protein>
    <recommendedName>
        <fullName>CASP-like protein 1E1</fullName>
        <shortName>MaCASPL1E1</shortName>
    </recommendedName>
</protein>
<name>CSPL1_MUSAC</name>
<accession>Q1EPG7</accession>
<evidence type="ECO:0000250" key="1"/>
<evidence type="ECO:0000255" key="2"/>
<evidence type="ECO:0000305" key="3"/>
<feature type="chain" id="PRO_0000370281" description="CASP-like protein 1E1">
    <location>
        <begin position="1"/>
        <end position="201"/>
    </location>
</feature>
<feature type="topological domain" description="Cytoplasmic" evidence="2">
    <location>
        <begin position="1"/>
        <end position="36"/>
    </location>
</feature>
<feature type="transmembrane region" description="Helical" evidence="2">
    <location>
        <begin position="37"/>
        <end position="57"/>
    </location>
</feature>
<feature type="topological domain" description="Extracellular" evidence="2">
    <location>
        <begin position="58"/>
        <end position="87"/>
    </location>
</feature>
<feature type="transmembrane region" description="Helical" evidence="2">
    <location>
        <begin position="88"/>
        <end position="108"/>
    </location>
</feature>
<feature type="topological domain" description="Cytoplasmic" evidence="2">
    <location>
        <begin position="109"/>
        <end position="127"/>
    </location>
</feature>
<feature type="transmembrane region" description="Helical" evidence="2">
    <location>
        <begin position="128"/>
        <end position="148"/>
    </location>
</feature>
<feature type="topological domain" description="Extracellular" evidence="2">
    <location>
        <begin position="149"/>
        <end position="173"/>
    </location>
</feature>
<feature type="transmembrane region" description="Helical" evidence="2">
    <location>
        <begin position="174"/>
        <end position="194"/>
    </location>
</feature>
<feature type="topological domain" description="Cytoplasmic" evidence="2">
    <location>
        <begin position="195"/>
        <end position="201"/>
    </location>
</feature>
<feature type="sequence conflict" description="In Ref. 2; ES437314." evidence="3" ref="2">
    <original>T</original>
    <variation>P</variation>
    <location>
        <position position="29"/>
    </location>
</feature>
<feature type="sequence conflict" description="In Ref. 2; ES437314." evidence="3" ref="2">
    <original>Q</original>
    <variation>L</variation>
    <location>
        <position position="33"/>
    </location>
</feature>
<feature type="sequence conflict" description="In Ref. 2; ES437314." evidence="3" ref="2">
    <original>F</original>
    <variation>V</variation>
    <location>
        <position position="165"/>
    </location>
</feature>
<feature type="sequence conflict" description="In Ref. 2; ES437314." evidence="3" ref="2">
    <original>M</original>
    <variation>I</variation>
    <location>
        <position position="180"/>
    </location>
</feature>
<dbReference type="EMBL" id="AC186747">
    <property type="protein sequence ID" value="ABF69990.1"/>
    <property type="molecule type" value="Genomic_DNA"/>
</dbReference>
<dbReference type="EMBL" id="ES437314">
    <property type="status" value="NOT_ANNOTATED_CDS"/>
    <property type="molecule type" value="mRNA"/>
</dbReference>
<dbReference type="SMR" id="Q1EPG7"/>
<dbReference type="GO" id="GO:0005886">
    <property type="term" value="C:plasma membrane"/>
    <property type="evidence" value="ECO:0007669"/>
    <property type="project" value="UniProtKB-SubCell"/>
</dbReference>
<dbReference type="InterPro" id="IPR006459">
    <property type="entry name" value="CASP/CASPL"/>
</dbReference>
<dbReference type="InterPro" id="IPR006702">
    <property type="entry name" value="CASP_dom"/>
</dbReference>
<dbReference type="InterPro" id="IPR044173">
    <property type="entry name" value="CASPL"/>
</dbReference>
<dbReference type="NCBIfam" id="TIGR01569">
    <property type="entry name" value="A_tha_TIGR01569"/>
    <property type="match status" value="1"/>
</dbReference>
<dbReference type="PANTHER" id="PTHR36488">
    <property type="entry name" value="CASP-LIKE PROTEIN 1U1"/>
    <property type="match status" value="1"/>
</dbReference>
<dbReference type="PANTHER" id="PTHR36488:SF8">
    <property type="entry name" value="CASP-LIKE PROTEIN 1U1"/>
    <property type="match status" value="1"/>
</dbReference>
<dbReference type="Pfam" id="PF04535">
    <property type="entry name" value="CASP_dom"/>
    <property type="match status" value="1"/>
</dbReference>
<keyword id="KW-1003">Cell membrane</keyword>
<keyword id="KW-0472">Membrane</keyword>
<keyword id="KW-0812">Transmembrane</keyword>
<keyword id="KW-1133">Transmembrane helix</keyword>
<gene>
    <name type="ORF">MA4_106O17.50</name>
</gene>
<reference key="1">
    <citation type="submission" date="2006-05" db="EMBL/GenBank/DDBJ databases">
        <authorList>
            <person name="Ciampi A.Y."/>
            <person name="Santos C.M.R."/>
            <person name="da Silva F.R."/>
            <person name="Pappas G.J. Jr."/>
            <person name="Ronning C.M."/>
            <person name="Cheung F."/>
            <person name="Haas B.J."/>
            <person name="Piffanelli P."/>
            <person name="Town C.D."/>
            <person name="Miller R.N.G."/>
            <person name="Souza M.T. Jr."/>
        </authorList>
    </citation>
    <scope>NUCLEOTIDE SEQUENCE [LARGE SCALE GENOMIC DNA]</scope>
</reference>
<reference key="2">
    <citation type="submission" date="2007-05" db="EMBL/GenBank/DDBJ databases">
        <title>ESTs from developing leaves and fruit of Musa accuminata cv. Grande Naine.</title>
        <authorList>
            <person name="Town C.D."/>
            <person name="Williams M."/>
            <person name="Viswanathan L."/>
            <person name="Utterback T."/>
            <person name="Cheung F."/>
        </authorList>
    </citation>
    <scope>NUCLEOTIDE SEQUENCE [LARGE SCALE MRNA]</scope>
    <source>
        <strain>cv. Grand nain</strain>
    </source>
</reference>
<reference key="3">
    <citation type="journal article" date="2014" name="Plant Physiol.">
        <title>Functional and evolutionary analysis of the CASPARIAN STRIP MEMBRANE DOMAIN PROTEIN family.</title>
        <authorList>
            <person name="Roppolo D."/>
            <person name="Boeckmann B."/>
            <person name="Pfister A."/>
            <person name="Boutet E."/>
            <person name="Rubio M.C."/>
            <person name="Denervaud-Tendon V."/>
            <person name="Vermeer J.E."/>
            <person name="Gheyselinck J."/>
            <person name="Xenarios I."/>
            <person name="Geldner N."/>
        </authorList>
    </citation>
    <scope>GENE FAMILY</scope>
    <scope>NOMENCLATURE</scope>
</reference>
<sequence length="201" mass="21100">MESQFRPGFDVSQGAGGRASKFGDVVAPTSSTQLPGIILRIVAIVLTFISAVVMGAARQTTTVTGIDAETALLTSITVTVKSTYSAAYVYFVVANVLVFFYSVVSLVLSMVNKARLTSMSLPFSIADLLMVVLLFSSNGAAAAISVVAEKGQQNLAGWDKICNLFGGLCARVNAAIVLSMLASVAYVILVVFGMANLRRSQ</sequence>
<organism>
    <name type="scientific">Musa acuminata</name>
    <name type="common">Banana</name>
    <name type="synonym">Musa cavendishii</name>
    <dbReference type="NCBI Taxonomy" id="4641"/>
    <lineage>
        <taxon>Eukaryota</taxon>
        <taxon>Viridiplantae</taxon>
        <taxon>Streptophyta</taxon>
        <taxon>Embryophyta</taxon>
        <taxon>Tracheophyta</taxon>
        <taxon>Spermatophyta</taxon>
        <taxon>Magnoliopsida</taxon>
        <taxon>Liliopsida</taxon>
        <taxon>Zingiberales</taxon>
        <taxon>Musaceae</taxon>
        <taxon>Musa</taxon>
    </lineage>
</organism>
<proteinExistence type="evidence at transcript level"/>
<comment type="subunit">
    <text evidence="1">Homodimer and heterodimers.</text>
</comment>
<comment type="subcellular location">
    <subcellularLocation>
        <location evidence="1">Cell membrane</location>
        <topology evidence="1">Multi-pass membrane protein</topology>
    </subcellularLocation>
</comment>
<comment type="similarity">
    <text evidence="3">Belongs to the Casparian strip membrane proteins (CASP) family.</text>
</comment>